<dbReference type="EMBL" id="D10454">
    <property type="protein sequence ID" value="BAA01248.1"/>
    <property type="molecule type" value="Genomic_RNA"/>
</dbReference>
<dbReference type="RefSeq" id="YP_009505624.1">
    <property type="nucleotide sequence ID" value="NC_038323.1"/>
</dbReference>
<dbReference type="SMR" id="Q00556"/>
<dbReference type="GeneID" id="37616511"/>
<dbReference type="OrthoDB" id="15901at10239"/>
<dbReference type="Proteomes" id="UP000242950">
    <property type="component" value="Genome"/>
</dbReference>
<dbReference type="GO" id="GO:0019029">
    <property type="term" value="C:helical viral capsid"/>
    <property type="evidence" value="ECO:0007669"/>
    <property type="project" value="UniProtKB-KW"/>
</dbReference>
<dbReference type="GO" id="GO:1990904">
    <property type="term" value="C:ribonucleoprotein complex"/>
    <property type="evidence" value="ECO:0007669"/>
    <property type="project" value="UniProtKB-KW"/>
</dbReference>
<dbReference type="GO" id="GO:0005198">
    <property type="term" value="F:structural molecule activity"/>
    <property type="evidence" value="ECO:0007669"/>
    <property type="project" value="InterPro"/>
</dbReference>
<dbReference type="InterPro" id="IPR013569">
    <property type="entry name" value="Carlavirus_coat_N"/>
</dbReference>
<dbReference type="InterPro" id="IPR000052">
    <property type="entry name" value="Pltvir_coat"/>
</dbReference>
<dbReference type="Pfam" id="PF00286">
    <property type="entry name" value="Flexi_CP"/>
    <property type="match status" value="1"/>
</dbReference>
<dbReference type="Pfam" id="PF08358">
    <property type="entry name" value="Flexi_CP_N"/>
    <property type="match status" value="1"/>
</dbReference>
<dbReference type="PRINTS" id="PR00232">
    <property type="entry name" value="POTXCARLCOAT"/>
</dbReference>
<dbReference type="PROSITE" id="PS00418">
    <property type="entry name" value="POTEX_CARLAVIRUS_COAT"/>
    <property type="match status" value="1"/>
</dbReference>
<evidence type="ECO:0000256" key="1">
    <source>
        <dbReference type="SAM" id="MobiDB-lite"/>
    </source>
</evidence>
<evidence type="ECO:0000305" key="2"/>
<accession>Q00556</accession>
<organism>
    <name type="scientific">Helenium virus S</name>
    <name type="common">HelVS</name>
    <dbReference type="NCBI Taxonomy" id="12171"/>
    <lineage>
        <taxon>Viruses</taxon>
        <taxon>Riboviria</taxon>
        <taxon>Orthornavirae</taxon>
        <taxon>Kitrinoviricota</taxon>
        <taxon>Alsuviricetes</taxon>
        <taxon>Tymovirales</taxon>
        <taxon>Betaflexiviridae</taxon>
        <taxon>Quinvirinae</taxon>
        <taxon>Carlavirus</taxon>
    </lineage>
</organism>
<name>CAPSD_HELVS</name>
<feature type="chain" id="PRO_0000222637" description="Capsid protein">
    <location>
        <begin position="1"/>
        <end position="299"/>
    </location>
</feature>
<feature type="region of interest" description="Disordered" evidence="1">
    <location>
        <begin position="1"/>
        <end position="46"/>
    </location>
</feature>
<feature type="compositionally biased region" description="Pro residues" evidence="1">
    <location>
        <begin position="20"/>
        <end position="34"/>
    </location>
</feature>
<feature type="compositionally biased region" description="Basic and acidic residues" evidence="1">
    <location>
        <begin position="35"/>
        <end position="46"/>
    </location>
</feature>
<keyword id="KW-0167">Capsid protein</keyword>
<keyword id="KW-1139">Helical capsid protein</keyword>
<keyword id="KW-0687">Ribonucleoprotein</keyword>
<keyword id="KW-0946">Virion</keyword>
<proteinExistence type="inferred from homology"/>
<protein>
    <recommendedName>
        <fullName>Capsid protein</fullName>
    </recommendedName>
    <alternativeName>
        <fullName>Coat protein</fullName>
        <shortName>CP</shortName>
    </alternativeName>
</protein>
<reference key="1">
    <citation type="journal article" date="1990" name="J. Gen. Virol.">
        <title>Nucleotide sequence of the 3'-terminal region of Helenium virus S RNA.</title>
        <authorList>
            <person name="Foster G.D."/>
            <person name="Millar A.W."/>
            <person name="Meehan B.M."/>
            <person name="Mills P.R."/>
        </authorList>
    </citation>
    <scope>NUCLEOTIDE SEQUENCE [GENOMIC RNA]</scope>
</reference>
<sequence length="299" mass="32877">MPPKVAPESSDAVSSQEQPQRPPPATPPVPTPPPGRREEVGDRAEDPILQRLESLTALLRSERSAVRVTNASFETGRPALQPTADMRGDVTNMYNRPSTDSLWAVKPKPISNNMATSEDMVKIKVALEGLGVPTEHITGIIYQMCFYCASTSSSSYQDPKGVFEWPGGAIMVDDVMGKVQEIAGIRRVCRLYAPVTWNYMHIHDSPPSDWASMGFAPNVKYAAFDCFDYVENPAAVQPLGGVIPRPTRDEYVAYNAYKLIVLNKANNNDTYGNFSAQITGGRMGPTIEHNFNNANNKKQ</sequence>
<organismHost>
    <name type="scientific">Helenium amarum</name>
    <dbReference type="NCBI Taxonomy" id="289417"/>
</organismHost>
<organismHost>
    <name type="scientific">Impatiens</name>
    <dbReference type="NCBI Taxonomy" id="35939"/>
</organismHost>
<comment type="function">
    <text>Required for genome encapsidation. Forms ribonucleoprotein complexes along with TGB1 helicase and viral RNA.</text>
</comment>
<comment type="subcellular location">
    <subcellularLocation>
        <location evidence="2">Virion</location>
    </subcellularLocation>
</comment>
<comment type="similarity">
    <text evidence="2">Belongs to the potexviruses coat protein family.</text>
</comment>